<organism>
    <name type="scientific">Karoophasma biedouwense</name>
    <name type="common">Gladiator</name>
    <name type="synonym">Heel-walker</name>
    <dbReference type="NCBI Taxonomy" id="253133"/>
    <lineage>
        <taxon>Eukaryota</taxon>
        <taxon>Metazoa</taxon>
        <taxon>Ecdysozoa</taxon>
        <taxon>Arthropoda</taxon>
        <taxon>Hexapoda</taxon>
        <taxon>Insecta</taxon>
        <taxon>Pterygota</taxon>
        <taxon>Neoptera</taxon>
        <taxon>Polyneoptera</taxon>
        <taxon>Mantophasmatodea</taxon>
        <taxon>Austrophasmatidae</taxon>
        <taxon>Karoophasma</taxon>
    </lineage>
</organism>
<sequence length="15" mass="1481">SGGGDGSGMWFGPRL</sequence>
<protein>
    <recommendedName>
        <fullName evidence="4">CAPA-Pyrokinin</fullName>
        <shortName evidence="4">CAPA-PK</shortName>
    </recommendedName>
    <alternativeName>
        <fullName evidence="1">FXPRL-amide</fullName>
    </alternativeName>
</protein>
<keyword id="KW-0027">Amidation</keyword>
<keyword id="KW-0903">Direct protein sequencing</keyword>
<keyword id="KW-0527">Neuropeptide</keyword>
<keyword id="KW-0964">Secreted</keyword>
<feature type="peptide" id="PRO_0000421604" description="CAPA-Pyrokinin" evidence="3">
    <location>
        <begin position="1"/>
        <end position="15"/>
    </location>
</feature>
<feature type="modified residue" description="Leucine amide" evidence="3">
    <location>
        <position position="15"/>
    </location>
</feature>
<reference evidence="5" key="1">
    <citation type="journal article" date="2012" name="Syst. Biol.">
        <title>Peptidomics-based phylogeny and biogeography of Mantophasmatodea (Hexapoda).</title>
        <authorList>
            <person name="Predel R."/>
            <person name="Neupert S."/>
            <person name="Huetteroth W."/>
            <person name="Kahnt J."/>
            <person name="Waidelich D."/>
            <person name="Roth S."/>
        </authorList>
    </citation>
    <scope>PROTEIN SEQUENCE</scope>
    <scope>AMIDATION AT LEU-15</scope>
    <source>
        <tissue evidence="3">Abdominal perisympathetic organs</tissue>
    </source>
</reference>
<dbReference type="GO" id="GO:0005576">
    <property type="term" value="C:extracellular region"/>
    <property type="evidence" value="ECO:0007669"/>
    <property type="project" value="UniProtKB-SubCell"/>
</dbReference>
<dbReference type="GO" id="GO:0005184">
    <property type="term" value="F:neuropeptide hormone activity"/>
    <property type="evidence" value="ECO:0007669"/>
    <property type="project" value="InterPro"/>
</dbReference>
<dbReference type="GO" id="GO:0007218">
    <property type="term" value="P:neuropeptide signaling pathway"/>
    <property type="evidence" value="ECO:0007669"/>
    <property type="project" value="UniProtKB-KW"/>
</dbReference>
<dbReference type="InterPro" id="IPR001484">
    <property type="entry name" value="Pyrokinin_CS"/>
</dbReference>
<dbReference type="PROSITE" id="PS00539">
    <property type="entry name" value="PYROKININ"/>
    <property type="match status" value="1"/>
</dbReference>
<accession>B3A060</accession>
<proteinExistence type="evidence at protein level"/>
<comment type="function">
    <text evidence="1">Myoactive.</text>
</comment>
<comment type="subcellular location">
    <subcellularLocation>
        <location evidence="6">Secreted</location>
    </subcellularLocation>
</comment>
<comment type="similarity">
    <text evidence="2">Belongs to the pyrokinin family.</text>
</comment>
<name>PPK4_KARBI</name>
<evidence type="ECO:0000250" key="1">
    <source>
        <dbReference type="UniProtKB" id="P82617"/>
    </source>
</evidence>
<evidence type="ECO:0000255" key="2"/>
<evidence type="ECO:0000269" key="3">
    <source>
    </source>
</evidence>
<evidence type="ECO:0000303" key="4">
    <source>
    </source>
</evidence>
<evidence type="ECO:0000305" key="5"/>
<evidence type="ECO:0000305" key="6">
    <source>
    </source>
</evidence>